<name>DCXR_MOUSE</name>
<comment type="function">
    <text>Catalyzes the NADPH-dependent reduction of several pentoses, tetroses, trioses, alpha-dicarbonyl compounds and L-xylulose. Participates in the uronate cycle of glucose metabolism. May play a role in the water absorption and cellular osmoregulation in the proximal renal tubules by producing xylitol, an osmolyte, thereby preventing osmolytic stress from occurring in the renal tubules.</text>
</comment>
<comment type="catalytic activity">
    <reaction evidence="4">
        <text>xylitol + NADP(+) = L-xylulose + NADPH + H(+)</text>
        <dbReference type="Rhea" id="RHEA:17025"/>
        <dbReference type="ChEBI" id="CHEBI:15378"/>
        <dbReference type="ChEBI" id="CHEBI:17151"/>
        <dbReference type="ChEBI" id="CHEBI:17399"/>
        <dbReference type="ChEBI" id="CHEBI:57783"/>
        <dbReference type="ChEBI" id="CHEBI:58349"/>
        <dbReference type="EC" id="1.1.1.10"/>
    </reaction>
</comment>
<comment type="subunit">
    <text>Homotetramer.</text>
</comment>
<comment type="subcellular location">
    <subcellularLocation>
        <location evidence="1">Membrane</location>
        <topology evidence="1">Peripheral membrane protein</topology>
    </subcellularLocation>
    <subcellularLocation>
        <location evidence="4">Apical cell membrane</location>
        <topology evidence="4">Peripheral membrane protein</topology>
    </subcellularLocation>
    <text evidence="1">Probably recruited to membranes via an interaction with phosphatidylinositol (By similarity). In kidney, it is localized in the brush border membranes of proximal tubular cells.</text>
</comment>
<comment type="tissue specificity">
    <text evidence="4">Highly expressed in kidney, liver and epididymis. Expressed at intermediate level in lung. Weakly or not expressed in brain, heart, spleen and testis.</text>
</comment>
<comment type="similarity">
    <text evidence="5">Belongs to the short-chain dehydrogenases/reductases (SDR) family.</text>
</comment>
<proteinExistence type="evidence at protein level"/>
<sequence length="244" mass="25746">MDLGLAGRRALVTGAGKGIGRSTVLALKAAGAQVVAVSRTREDLDDLVRECPGVEPVCVDLADWEATEQALSNVGPVDLLVNNAAVALLQPFLEVTKEACDTSFNVNLRAVIQVSQIVAKGMIARGVPGAIVNVSSQASQRALTNHTVYCSTKGALDMLTKMMALELGPHKIRVNAVNPTVVMTPMGRTNWSDPHKAKAMLDRIPLGKFAEVENVVDTILFLLSNRSGMTTGSTLPVDGGFLAT</sequence>
<accession>Q91X52</accession>
<accession>Q3U5L5</accession>
<accession>Q9D129</accession>
<accession>Q9D8W1</accession>
<evidence type="ECO:0000250" key="1"/>
<evidence type="ECO:0000250" key="2">
    <source>
        <dbReference type="UniProtKB" id="Q7Z4W1"/>
    </source>
</evidence>
<evidence type="ECO:0000255" key="3">
    <source>
        <dbReference type="PROSITE-ProRule" id="PRU10001"/>
    </source>
</evidence>
<evidence type="ECO:0000269" key="4">
    <source>
    </source>
</evidence>
<evidence type="ECO:0000305" key="5"/>
<organism>
    <name type="scientific">Mus musculus</name>
    <name type="common">Mouse</name>
    <dbReference type="NCBI Taxonomy" id="10090"/>
    <lineage>
        <taxon>Eukaryota</taxon>
        <taxon>Metazoa</taxon>
        <taxon>Chordata</taxon>
        <taxon>Craniata</taxon>
        <taxon>Vertebrata</taxon>
        <taxon>Euteleostomi</taxon>
        <taxon>Mammalia</taxon>
        <taxon>Eutheria</taxon>
        <taxon>Euarchontoglires</taxon>
        <taxon>Glires</taxon>
        <taxon>Rodentia</taxon>
        <taxon>Myomorpha</taxon>
        <taxon>Muroidea</taxon>
        <taxon>Muridae</taxon>
        <taxon>Murinae</taxon>
        <taxon>Mus</taxon>
        <taxon>Mus</taxon>
    </lineage>
</organism>
<keyword id="KW-0007">Acetylation</keyword>
<keyword id="KW-0119">Carbohydrate metabolism</keyword>
<keyword id="KW-1003">Cell membrane</keyword>
<keyword id="KW-0313">Glucose metabolism</keyword>
<keyword id="KW-0472">Membrane</keyword>
<keyword id="KW-0488">Methylation</keyword>
<keyword id="KW-0521">NADP</keyword>
<keyword id="KW-0560">Oxidoreductase</keyword>
<keyword id="KW-1185">Reference proteome</keyword>
<keyword id="KW-0859">Xylose metabolism</keyword>
<gene>
    <name type="primary">Dcxr</name>
</gene>
<reference key="1">
    <citation type="journal article" date="2002" name="J. Biol. Chem.">
        <title>Molecular characterization of mammalian dicarbonyl/L-xylulose reductase and its localization in kidney.</title>
        <authorList>
            <person name="Nakagawa J."/>
            <person name="Ishikura S."/>
            <person name="Asami J."/>
            <person name="Isaji T."/>
            <person name="Usami N."/>
            <person name="Hara A."/>
            <person name="Sakurai T."/>
            <person name="Tsuritani K."/>
            <person name="Oda K."/>
            <person name="Takahashi M."/>
            <person name="Yoshimoto M."/>
            <person name="Otsuka N."/>
            <person name="Kitamura K."/>
        </authorList>
    </citation>
    <scope>NUCLEOTIDE SEQUENCE [MRNA]</scope>
    <scope>ENZYME ACTIVITY</scope>
    <scope>SUBCELLULAR LOCATION</scope>
    <scope>TISSUE SPECIFICITY</scope>
    <source>
        <strain>C57BL/6J</strain>
        <tissue>Kidney</tissue>
    </source>
</reference>
<reference key="2">
    <citation type="journal article" date="2005" name="Science">
        <title>The transcriptional landscape of the mammalian genome.</title>
        <authorList>
            <person name="Carninci P."/>
            <person name="Kasukawa T."/>
            <person name="Katayama S."/>
            <person name="Gough J."/>
            <person name="Frith M.C."/>
            <person name="Maeda N."/>
            <person name="Oyama R."/>
            <person name="Ravasi T."/>
            <person name="Lenhard B."/>
            <person name="Wells C."/>
            <person name="Kodzius R."/>
            <person name="Shimokawa K."/>
            <person name="Bajic V.B."/>
            <person name="Brenner S.E."/>
            <person name="Batalov S."/>
            <person name="Forrest A.R."/>
            <person name="Zavolan M."/>
            <person name="Davis M.J."/>
            <person name="Wilming L.G."/>
            <person name="Aidinis V."/>
            <person name="Allen J.E."/>
            <person name="Ambesi-Impiombato A."/>
            <person name="Apweiler R."/>
            <person name="Aturaliya R.N."/>
            <person name="Bailey T.L."/>
            <person name="Bansal M."/>
            <person name="Baxter L."/>
            <person name="Beisel K.W."/>
            <person name="Bersano T."/>
            <person name="Bono H."/>
            <person name="Chalk A.M."/>
            <person name="Chiu K.P."/>
            <person name="Choudhary V."/>
            <person name="Christoffels A."/>
            <person name="Clutterbuck D.R."/>
            <person name="Crowe M.L."/>
            <person name="Dalla E."/>
            <person name="Dalrymple B.P."/>
            <person name="de Bono B."/>
            <person name="Della Gatta G."/>
            <person name="di Bernardo D."/>
            <person name="Down T."/>
            <person name="Engstrom P."/>
            <person name="Fagiolini M."/>
            <person name="Faulkner G."/>
            <person name="Fletcher C.F."/>
            <person name="Fukushima T."/>
            <person name="Furuno M."/>
            <person name="Futaki S."/>
            <person name="Gariboldi M."/>
            <person name="Georgii-Hemming P."/>
            <person name="Gingeras T.R."/>
            <person name="Gojobori T."/>
            <person name="Green R.E."/>
            <person name="Gustincich S."/>
            <person name="Harbers M."/>
            <person name="Hayashi Y."/>
            <person name="Hensch T.K."/>
            <person name="Hirokawa N."/>
            <person name="Hill D."/>
            <person name="Huminiecki L."/>
            <person name="Iacono M."/>
            <person name="Ikeo K."/>
            <person name="Iwama A."/>
            <person name="Ishikawa T."/>
            <person name="Jakt M."/>
            <person name="Kanapin A."/>
            <person name="Katoh M."/>
            <person name="Kawasawa Y."/>
            <person name="Kelso J."/>
            <person name="Kitamura H."/>
            <person name="Kitano H."/>
            <person name="Kollias G."/>
            <person name="Krishnan S.P."/>
            <person name="Kruger A."/>
            <person name="Kummerfeld S.K."/>
            <person name="Kurochkin I.V."/>
            <person name="Lareau L.F."/>
            <person name="Lazarevic D."/>
            <person name="Lipovich L."/>
            <person name="Liu J."/>
            <person name="Liuni S."/>
            <person name="McWilliam S."/>
            <person name="Madan Babu M."/>
            <person name="Madera M."/>
            <person name="Marchionni L."/>
            <person name="Matsuda H."/>
            <person name="Matsuzawa S."/>
            <person name="Miki H."/>
            <person name="Mignone F."/>
            <person name="Miyake S."/>
            <person name="Morris K."/>
            <person name="Mottagui-Tabar S."/>
            <person name="Mulder N."/>
            <person name="Nakano N."/>
            <person name="Nakauchi H."/>
            <person name="Ng P."/>
            <person name="Nilsson R."/>
            <person name="Nishiguchi S."/>
            <person name="Nishikawa S."/>
            <person name="Nori F."/>
            <person name="Ohara O."/>
            <person name="Okazaki Y."/>
            <person name="Orlando V."/>
            <person name="Pang K.C."/>
            <person name="Pavan W.J."/>
            <person name="Pavesi G."/>
            <person name="Pesole G."/>
            <person name="Petrovsky N."/>
            <person name="Piazza S."/>
            <person name="Reed J."/>
            <person name="Reid J.F."/>
            <person name="Ring B.Z."/>
            <person name="Ringwald M."/>
            <person name="Rost B."/>
            <person name="Ruan Y."/>
            <person name="Salzberg S.L."/>
            <person name="Sandelin A."/>
            <person name="Schneider C."/>
            <person name="Schoenbach C."/>
            <person name="Sekiguchi K."/>
            <person name="Semple C.A."/>
            <person name="Seno S."/>
            <person name="Sessa L."/>
            <person name="Sheng Y."/>
            <person name="Shibata Y."/>
            <person name="Shimada H."/>
            <person name="Shimada K."/>
            <person name="Silva D."/>
            <person name="Sinclair B."/>
            <person name="Sperling S."/>
            <person name="Stupka E."/>
            <person name="Sugiura K."/>
            <person name="Sultana R."/>
            <person name="Takenaka Y."/>
            <person name="Taki K."/>
            <person name="Tammoja K."/>
            <person name="Tan S.L."/>
            <person name="Tang S."/>
            <person name="Taylor M.S."/>
            <person name="Tegner J."/>
            <person name="Teichmann S.A."/>
            <person name="Ueda H.R."/>
            <person name="van Nimwegen E."/>
            <person name="Verardo R."/>
            <person name="Wei C.L."/>
            <person name="Yagi K."/>
            <person name="Yamanishi H."/>
            <person name="Zabarovsky E."/>
            <person name="Zhu S."/>
            <person name="Zimmer A."/>
            <person name="Hide W."/>
            <person name="Bult C."/>
            <person name="Grimmond S.M."/>
            <person name="Teasdale R.D."/>
            <person name="Liu E.T."/>
            <person name="Brusic V."/>
            <person name="Quackenbush J."/>
            <person name="Wahlestedt C."/>
            <person name="Mattick J.S."/>
            <person name="Hume D.A."/>
            <person name="Kai C."/>
            <person name="Sasaki D."/>
            <person name="Tomaru Y."/>
            <person name="Fukuda S."/>
            <person name="Kanamori-Katayama M."/>
            <person name="Suzuki M."/>
            <person name="Aoki J."/>
            <person name="Arakawa T."/>
            <person name="Iida J."/>
            <person name="Imamura K."/>
            <person name="Itoh M."/>
            <person name="Kato T."/>
            <person name="Kawaji H."/>
            <person name="Kawagashira N."/>
            <person name="Kawashima T."/>
            <person name="Kojima M."/>
            <person name="Kondo S."/>
            <person name="Konno H."/>
            <person name="Nakano K."/>
            <person name="Ninomiya N."/>
            <person name="Nishio T."/>
            <person name="Okada M."/>
            <person name="Plessy C."/>
            <person name="Shibata K."/>
            <person name="Shiraki T."/>
            <person name="Suzuki S."/>
            <person name="Tagami M."/>
            <person name="Waki K."/>
            <person name="Watahiki A."/>
            <person name="Okamura-Oho Y."/>
            <person name="Suzuki H."/>
            <person name="Kawai J."/>
            <person name="Hayashizaki Y."/>
        </authorList>
    </citation>
    <scope>NUCLEOTIDE SEQUENCE [LARGE SCALE MRNA]</scope>
    <source>
        <strain>C57BL/6J</strain>
        <tissue>Bone marrow</tissue>
        <tissue>Embryo</tissue>
        <tissue>Pancreas</tissue>
    </source>
</reference>
<reference key="3">
    <citation type="journal article" date="2004" name="Genome Res.">
        <title>The status, quality, and expansion of the NIH full-length cDNA project: the Mammalian Gene Collection (MGC).</title>
        <authorList>
            <consortium name="The MGC Project Team"/>
        </authorList>
    </citation>
    <scope>NUCLEOTIDE SEQUENCE [LARGE SCALE MRNA]</scope>
    <source>
        <strain>FVB/N</strain>
        <tissue>Salivary gland</tissue>
    </source>
</reference>
<reference key="4">
    <citation type="journal article" date="2010" name="Cell">
        <title>A tissue-specific atlas of mouse protein phosphorylation and expression.</title>
        <authorList>
            <person name="Huttlin E.L."/>
            <person name="Jedrychowski M.P."/>
            <person name="Elias J.E."/>
            <person name="Goswami T."/>
            <person name="Rad R."/>
            <person name="Beausoleil S.A."/>
            <person name="Villen J."/>
            <person name="Haas W."/>
            <person name="Sowa M.E."/>
            <person name="Gygi S.P."/>
        </authorList>
    </citation>
    <scope>IDENTIFICATION BY MASS SPECTROMETRY [LARGE SCALE ANALYSIS]</scope>
    <source>
        <tissue>Brain</tissue>
        <tissue>Brown adipose tissue</tissue>
        <tissue>Heart</tissue>
        <tissue>Kidney</tissue>
        <tissue>Liver</tissue>
        <tissue>Lung</tissue>
        <tissue>Pancreas</tissue>
        <tissue>Spleen</tissue>
        <tissue>Testis</tissue>
    </source>
</reference>
<dbReference type="EC" id="1.1.1.10"/>
<dbReference type="EMBL" id="D89656">
    <property type="protein sequence ID" value="BAB88678.1"/>
    <property type="molecule type" value="mRNA"/>
</dbReference>
<dbReference type="EMBL" id="AK004023">
    <property type="protein sequence ID" value="BAB23131.1"/>
    <property type="molecule type" value="mRNA"/>
</dbReference>
<dbReference type="EMBL" id="AK007627">
    <property type="protein sequence ID" value="BAB25146.1"/>
    <property type="molecule type" value="mRNA"/>
</dbReference>
<dbReference type="EMBL" id="AK153521">
    <property type="protein sequence ID" value="BAE32063.1"/>
    <property type="molecule type" value="mRNA"/>
</dbReference>
<dbReference type="EMBL" id="BC012247">
    <property type="protein sequence ID" value="AAH12247.1"/>
    <property type="molecule type" value="mRNA"/>
</dbReference>
<dbReference type="CCDS" id="CCDS25755.1"/>
<dbReference type="RefSeq" id="NP_080704.2">
    <property type="nucleotide sequence ID" value="NM_026428.3"/>
</dbReference>
<dbReference type="SMR" id="Q91X52"/>
<dbReference type="FunCoup" id="Q91X52">
    <property type="interactions" value="389"/>
</dbReference>
<dbReference type="STRING" id="10090.ENSMUSP00000026144"/>
<dbReference type="GlyGen" id="Q91X52">
    <property type="glycosylation" value="3 sites, 2 N-linked glycans (2 sites), 1 O-linked glycan (1 site)"/>
</dbReference>
<dbReference type="iPTMnet" id="Q91X52"/>
<dbReference type="PhosphoSitePlus" id="Q91X52"/>
<dbReference type="SwissPalm" id="Q91X52"/>
<dbReference type="REPRODUCTION-2DPAGE" id="Q91X52"/>
<dbReference type="jPOST" id="Q91X52"/>
<dbReference type="PaxDb" id="10090-ENSMUSP00000026144"/>
<dbReference type="PeptideAtlas" id="Q91X52"/>
<dbReference type="ProteomicsDB" id="279318"/>
<dbReference type="Pumba" id="Q91X52"/>
<dbReference type="Antibodypedia" id="19868">
    <property type="antibodies" value="349 antibodies from 32 providers"/>
</dbReference>
<dbReference type="DNASU" id="67880"/>
<dbReference type="Ensembl" id="ENSMUST00000026144.5">
    <property type="protein sequence ID" value="ENSMUSP00000026144.5"/>
    <property type="gene ID" value="ENSMUSG00000039450.12"/>
</dbReference>
<dbReference type="GeneID" id="67880"/>
<dbReference type="KEGG" id="mmu:67880"/>
<dbReference type="UCSC" id="uc007muh.1">
    <property type="organism name" value="mouse"/>
</dbReference>
<dbReference type="AGR" id="MGI:1915130"/>
<dbReference type="CTD" id="51181"/>
<dbReference type="MGI" id="MGI:1915130">
    <property type="gene designation" value="Dcxr"/>
</dbReference>
<dbReference type="VEuPathDB" id="HostDB:ENSMUSG00000039450"/>
<dbReference type="eggNOG" id="KOG1207">
    <property type="taxonomic scope" value="Eukaryota"/>
</dbReference>
<dbReference type="GeneTree" id="ENSGT00940000154873"/>
<dbReference type="HOGENOM" id="CLU_010194_1_1_1"/>
<dbReference type="InParanoid" id="Q91X52"/>
<dbReference type="OMA" id="FPQWGAY"/>
<dbReference type="OrthoDB" id="1393670at2759"/>
<dbReference type="PhylomeDB" id="Q91X52"/>
<dbReference type="TreeFam" id="TF313841"/>
<dbReference type="BRENDA" id="1.1.1.10">
    <property type="organism ID" value="3474"/>
</dbReference>
<dbReference type="Reactome" id="R-MMU-5661270">
    <property type="pathway name" value="Formation of xylulose-5-phosphate"/>
</dbReference>
<dbReference type="SABIO-RK" id="Q91X52"/>
<dbReference type="BioGRID-ORCS" id="67880">
    <property type="hits" value="1 hit in 77 CRISPR screens"/>
</dbReference>
<dbReference type="ChiTaRS" id="Dcxr">
    <property type="organism name" value="mouse"/>
</dbReference>
<dbReference type="PRO" id="PR:Q91X52"/>
<dbReference type="Proteomes" id="UP000000589">
    <property type="component" value="Chromosome 11"/>
</dbReference>
<dbReference type="RNAct" id="Q91X52">
    <property type="molecule type" value="protein"/>
</dbReference>
<dbReference type="Bgee" id="ENSMUSG00000039450">
    <property type="expression patterns" value="Expressed in right kidney and 220 other cell types or tissues"/>
</dbReference>
<dbReference type="ExpressionAtlas" id="Q91X52">
    <property type="expression patterns" value="baseline and differential"/>
</dbReference>
<dbReference type="GO" id="GO:0016324">
    <property type="term" value="C:apical plasma membrane"/>
    <property type="evidence" value="ECO:0007669"/>
    <property type="project" value="UniProtKB-SubCell"/>
</dbReference>
<dbReference type="GO" id="GO:0005903">
    <property type="term" value="C:brush border"/>
    <property type="evidence" value="ECO:0000314"/>
    <property type="project" value="MGI"/>
</dbReference>
<dbReference type="GO" id="GO:0005881">
    <property type="term" value="C:cytoplasmic microtubule"/>
    <property type="evidence" value="ECO:0000250"/>
    <property type="project" value="UniProtKB"/>
</dbReference>
<dbReference type="GO" id="GO:0005829">
    <property type="term" value="C:cytosol"/>
    <property type="evidence" value="ECO:0000314"/>
    <property type="project" value="MGI"/>
</dbReference>
<dbReference type="GO" id="GO:0005902">
    <property type="term" value="C:microvillus"/>
    <property type="evidence" value="ECO:0000314"/>
    <property type="project" value="MGI"/>
</dbReference>
<dbReference type="GO" id="GO:0042802">
    <property type="term" value="F:identical protein binding"/>
    <property type="evidence" value="ECO:0007669"/>
    <property type="project" value="Ensembl"/>
</dbReference>
<dbReference type="GO" id="GO:0050038">
    <property type="term" value="F:L-xylulose reductase (NADPH) activity"/>
    <property type="evidence" value="ECO:0000314"/>
    <property type="project" value="UniProtKB"/>
</dbReference>
<dbReference type="GO" id="GO:0016614">
    <property type="term" value="F:oxidoreductase activity, acting on CH-OH group of donors"/>
    <property type="evidence" value="ECO:0000314"/>
    <property type="project" value="MGI"/>
</dbReference>
<dbReference type="GO" id="GO:0016655">
    <property type="term" value="F:oxidoreductase activity, acting on NAD(P)H, quinone or similar compound as acceptor"/>
    <property type="evidence" value="ECO:0007669"/>
    <property type="project" value="Ensembl"/>
</dbReference>
<dbReference type="GO" id="GO:0019640">
    <property type="term" value="P:D-glucuronate catabolic process to D-xylulose 5-phosphate"/>
    <property type="evidence" value="ECO:0000314"/>
    <property type="project" value="MGI"/>
</dbReference>
<dbReference type="GO" id="GO:0042732">
    <property type="term" value="P:D-xylose metabolic process"/>
    <property type="evidence" value="ECO:0007669"/>
    <property type="project" value="UniProtKB-KW"/>
</dbReference>
<dbReference type="GO" id="GO:0006006">
    <property type="term" value="P:glucose metabolic process"/>
    <property type="evidence" value="ECO:0000314"/>
    <property type="project" value="UniProtKB"/>
</dbReference>
<dbReference type="GO" id="GO:0006739">
    <property type="term" value="P:NADP metabolic process"/>
    <property type="evidence" value="ECO:0000314"/>
    <property type="project" value="MGI"/>
</dbReference>
<dbReference type="GO" id="GO:2000379">
    <property type="term" value="P:positive regulation of reactive oxygen species metabolic process"/>
    <property type="evidence" value="ECO:0007669"/>
    <property type="project" value="Ensembl"/>
</dbReference>
<dbReference type="GO" id="GO:0005997">
    <property type="term" value="P:xylulose metabolic process"/>
    <property type="evidence" value="ECO:0000314"/>
    <property type="project" value="MGI"/>
</dbReference>
<dbReference type="CDD" id="cd05351">
    <property type="entry name" value="XR_like_SDR_c"/>
    <property type="match status" value="1"/>
</dbReference>
<dbReference type="FunFam" id="3.40.50.720:FF:000214">
    <property type="entry name" value="L-xylulose reductase"/>
    <property type="match status" value="1"/>
</dbReference>
<dbReference type="Gene3D" id="3.40.50.720">
    <property type="entry name" value="NAD(P)-binding Rossmann-like Domain"/>
    <property type="match status" value="1"/>
</dbReference>
<dbReference type="InterPro" id="IPR051737">
    <property type="entry name" value="L-xylulose/Carbonyl_redctase"/>
</dbReference>
<dbReference type="InterPro" id="IPR036291">
    <property type="entry name" value="NAD(P)-bd_dom_sf"/>
</dbReference>
<dbReference type="InterPro" id="IPR020904">
    <property type="entry name" value="Sc_DH/Rdtase_CS"/>
</dbReference>
<dbReference type="InterPro" id="IPR002347">
    <property type="entry name" value="SDR_fam"/>
</dbReference>
<dbReference type="PANTHER" id="PTHR44252">
    <property type="entry name" value="D-ERYTHRULOSE REDUCTASE"/>
    <property type="match status" value="1"/>
</dbReference>
<dbReference type="PANTHER" id="PTHR44252:SF2">
    <property type="entry name" value="L-XYLULOSE REDUCTASE"/>
    <property type="match status" value="1"/>
</dbReference>
<dbReference type="Pfam" id="PF13561">
    <property type="entry name" value="adh_short_C2"/>
    <property type="match status" value="1"/>
</dbReference>
<dbReference type="PRINTS" id="PR00081">
    <property type="entry name" value="GDHRDH"/>
</dbReference>
<dbReference type="PRINTS" id="PR00080">
    <property type="entry name" value="SDRFAMILY"/>
</dbReference>
<dbReference type="SUPFAM" id="SSF51735">
    <property type="entry name" value="NAD(P)-binding Rossmann-fold domains"/>
    <property type="match status" value="1"/>
</dbReference>
<dbReference type="PROSITE" id="PS00061">
    <property type="entry name" value="ADH_SHORT"/>
    <property type="match status" value="1"/>
</dbReference>
<feature type="chain" id="PRO_0000054556" description="L-xylulose reductase">
    <location>
        <begin position="1"/>
        <end position="244"/>
    </location>
</feature>
<feature type="active site" description="Proton acceptor" evidence="3">
    <location>
        <position position="149"/>
    </location>
</feature>
<feature type="active site" evidence="1">
    <location>
        <position position="153"/>
    </location>
</feature>
<feature type="binding site" evidence="1">
    <location>
        <begin position="11"/>
        <end position="39"/>
    </location>
    <ligand>
        <name>NADP(+)</name>
        <dbReference type="ChEBI" id="CHEBI:58349"/>
    </ligand>
</feature>
<feature type="binding site" evidence="1">
    <location>
        <position position="136"/>
    </location>
    <ligand>
        <name>substrate</name>
    </ligand>
</feature>
<feature type="modified residue" description="N-acetylmethionine" evidence="2">
    <location>
        <position position="1"/>
    </location>
</feature>
<feature type="modified residue" description="Omega-N-methylarginine" evidence="2">
    <location>
        <position position="21"/>
    </location>
</feature>
<feature type="sequence conflict" description="In Ref. 3; AAH12247." evidence="5" ref="3">
    <original>V</original>
    <variation>N</variation>
    <location>
        <position position="127"/>
    </location>
</feature>
<feature type="sequence conflict" description="In Ref. 3; AAH12247." evidence="5" ref="3">
    <original>NVS</original>
    <variation>KKY</variation>
    <location>
        <begin position="133"/>
        <end position="135"/>
    </location>
</feature>
<feature type="sequence conflict" description="In Ref. 3; AAH12247." evidence="5" ref="3">
    <original>DM</original>
    <variation>FL</variation>
    <location>
        <begin position="157"/>
        <end position="158"/>
    </location>
</feature>
<feature type="sequence conflict" description="In Ref. 3; AAH12247." evidence="5" ref="3">
    <original>M</original>
    <variation>R</variation>
    <location>
        <position position="162"/>
    </location>
</feature>
<feature type="sequence conflict" description="In Ref. 3; AAH12247." evidence="5" ref="3">
    <original>I</original>
    <variation>S</variation>
    <location>
        <position position="172"/>
    </location>
</feature>
<feature type="sequence conflict" description="In Ref. 3; AAH12247." evidence="5" ref="3">
    <original>T</original>
    <variation>R</variation>
    <location>
        <position position="184"/>
    </location>
</feature>
<feature type="sequence conflict" description="In Ref. 3; AAH12247." evidence="5" ref="3">
    <original>DR</original>
    <variation>ES</variation>
    <location>
        <begin position="202"/>
        <end position="203"/>
    </location>
</feature>
<feature type="sequence conflict" description="In Ref. 2; BAB23131." evidence="5" ref="2">
    <original>S</original>
    <variation>G</variation>
    <location>
        <position position="224"/>
    </location>
</feature>
<protein>
    <recommendedName>
        <fullName>L-xylulose reductase</fullName>
        <shortName>XR</shortName>
        <ecNumber>1.1.1.10</ecNumber>
    </recommendedName>
    <alternativeName>
        <fullName>Dicarbonyl/L-xylulose reductase</fullName>
    </alternativeName>
</protein>